<accession>A6U871</accession>
<evidence type="ECO:0000255" key="1">
    <source>
        <dbReference type="HAMAP-Rule" id="MF_01333"/>
    </source>
</evidence>
<evidence type="ECO:0000305" key="2"/>
<reference key="1">
    <citation type="submission" date="2007-06" db="EMBL/GenBank/DDBJ databases">
        <title>Complete sequence of Sinorhizobium medicae WSM419 chromosome.</title>
        <authorList>
            <consortium name="US DOE Joint Genome Institute"/>
            <person name="Copeland A."/>
            <person name="Lucas S."/>
            <person name="Lapidus A."/>
            <person name="Barry K."/>
            <person name="Glavina del Rio T."/>
            <person name="Dalin E."/>
            <person name="Tice H."/>
            <person name="Pitluck S."/>
            <person name="Chain P."/>
            <person name="Malfatti S."/>
            <person name="Shin M."/>
            <person name="Vergez L."/>
            <person name="Schmutz J."/>
            <person name="Larimer F."/>
            <person name="Land M."/>
            <person name="Hauser L."/>
            <person name="Kyrpides N."/>
            <person name="Mikhailova N."/>
            <person name="Reeve W.G."/>
            <person name="Richardson P."/>
        </authorList>
    </citation>
    <scope>NUCLEOTIDE SEQUENCE [LARGE SCALE GENOMIC DNA]</scope>
    <source>
        <strain>WSM419</strain>
    </source>
</reference>
<name>RL5_SINMW</name>
<sequence>MAKSAYEPRLKKEYVERIRKAIQEQFSYANEMQIPRLDKIVINMGVGEATGDSKKPTVAAADLAAIAGQKPVITRARNSIAGFKLREGMPIGAKVTLRGVRMYEFLDRLINIALPRVRDFRGLNPKSFDGRGNFAMGIKEHIVFPEINYDKVDQMWGMDIIVCTTATNDDEARALLKEFNFPFRQ</sequence>
<keyword id="KW-0687">Ribonucleoprotein</keyword>
<keyword id="KW-0689">Ribosomal protein</keyword>
<keyword id="KW-0694">RNA-binding</keyword>
<keyword id="KW-0699">rRNA-binding</keyword>
<keyword id="KW-0820">tRNA-binding</keyword>
<comment type="function">
    <text evidence="1">This is one of the proteins that bind and probably mediate the attachment of the 5S RNA into the large ribosomal subunit, where it forms part of the central protuberance. In the 70S ribosome it contacts protein S13 of the 30S subunit (bridge B1b), connecting the 2 subunits; this bridge is implicated in subunit movement. Contacts the P site tRNA; the 5S rRNA and some of its associated proteins might help stabilize positioning of ribosome-bound tRNAs.</text>
</comment>
<comment type="subunit">
    <text evidence="1">Part of the 50S ribosomal subunit; part of the 5S rRNA/L5/L18/L25 subcomplex. Contacts the 5S rRNA and the P site tRNA. Forms a bridge to the 30S subunit in the 70S ribosome.</text>
</comment>
<comment type="similarity">
    <text evidence="1">Belongs to the universal ribosomal protein uL5 family.</text>
</comment>
<gene>
    <name evidence="1" type="primary">rplE</name>
    <name type="ordered locus">Smed_0998</name>
</gene>
<organism>
    <name type="scientific">Sinorhizobium medicae (strain WSM419)</name>
    <name type="common">Ensifer medicae</name>
    <dbReference type="NCBI Taxonomy" id="366394"/>
    <lineage>
        <taxon>Bacteria</taxon>
        <taxon>Pseudomonadati</taxon>
        <taxon>Pseudomonadota</taxon>
        <taxon>Alphaproteobacteria</taxon>
        <taxon>Hyphomicrobiales</taxon>
        <taxon>Rhizobiaceae</taxon>
        <taxon>Sinorhizobium/Ensifer group</taxon>
        <taxon>Sinorhizobium</taxon>
    </lineage>
</organism>
<dbReference type="EMBL" id="CP000738">
    <property type="protein sequence ID" value="ABR59851.1"/>
    <property type="molecule type" value="Genomic_DNA"/>
</dbReference>
<dbReference type="RefSeq" id="WP_011975179.1">
    <property type="nucleotide sequence ID" value="NC_009636.1"/>
</dbReference>
<dbReference type="RefSeq" id="YP_001326686.1">
    <property type="nucleotide sequence ID" value="NC_009636.1"/>
</dbReference>
<dbReference type="SMR" id="A6U871"/>
<dbReference type="STRING" id="366394.Smed_0998"/>
<dbReference type="GeneID" id="61614918"/>
<dbReference type="KEGG" id="smd:Smed_0998"/>
<dbReference type="PATRIC" id="fig|366394.8.peg.4119"/>
<dbReference type="eggNOG" id="COG0094">
    <property type="taxonomic scope" value="Bacteria"/>
</dbReference>
<dbReference type="HOGENOM" id="CLU_061015_2_1_5"/>
<dbReference type="OrthoDB" id="9806626at2"/>
<dbReference type="Proteomes" id="UP000001108">
    <property type="component" value="Chromosome"/>
</dbReference>
<dbReference type="GO" id="GO:1990904">
    <property type="term" value="C:ribonucleoprotein complex"/>
    <property type="evidence" value="ECO:0007669"/>
    <property type="project" value="UniProtKB-KW"/>
</dbReference>
<dbReference type="GO" id="GO:0005840">
    <property type="term" value="C:ribosome"/>
    <property type="evidence" value="ECO:0007669"/>
    <property type="project" value="UniProtKB-KW"/>
</dbReference>
<dbReference type="GO" id="GO:0019843">
    <property type="term" value="F:rRNA binding"/>
    <property type="evidence" value="ECO:0007669"/>
    <property type="project" value="UniProtKB-UniRule"/>
</dbReference>
<dbReference type="GO" id="GO:0003735">
    <property type="term" value="F:structural constituent of ribosome"/>
    <property type="evidence" value="ECO:0007669"/>
    <property type="project" value="InterPro"/>
</dbReference>
<dbReference type="GO" id="GO:0000049">
    <property type="term" value="F:tRNA binding"/>
    <property type="evidence" value="ECO:0007669"/>
    <property type="project" value="UniProtKB-UniRule"/>
</dbReference>
<dbReference type="GO" id="GO:0006412">
    <property type="term" value="P:translation"/>
    <property type="evidence" value="ECO:0007669"/>
    <property type="project" value="UniProtKB-UniRule"/>
</dbReference>
<dbReference type="FunFam" id="3.30.1440.10:FF:000001">
    <property type="entry name" value="50S ribosomal protein L5"/>
    <property type="match status" value="1"/>
</dbReference>
<dbReference type="Gene3D" id="3.30.1440.10">
    <property type="match status" value="1"/>
</dbReference>
<dbReference type="HAMAP" id="MF_01333_B">
    <property type="entry name" value="Ribosomal_uL5_B"/>
    <property type="match status" value="1"/>
</dbReference>
<dbReference type="InterPro" id="IPR002132">
    <property type="entry name" value="Ribosomal_uL5"/>
</dbReference>
<dbReference type="InterPro" id="IPR020930">
    <property type="entry name" value="Ribosomal_uL5_bac-type"/>
</dbReference>
<dbReference type="InterPro" id="IPR031309">
    <property type="entry name" value="Ribosomal_uL5_C"/>
</dbReference>
<dbReference type="InterPro" id="IPR020929">
    <property type="entry name" value="Ribosomal_uL5_CS"/>
</dbReference>
<dbReference type="InterPro" id="IPR022803">
    <property type="entry name" value="Ribosomal_uL5_dom_sf"/>
</dbReference>
<dbReference type="InterPro" id="IPR031310">
    <property type="entry name" value="Ribosomal_uL5_N"/>
</dbReference>
<dbReference type="NCBIfam" id="NF000585">
    <property type="entry name" value="PRK00010.1"/>
    <property type="match status" value="1"/>
</dbReference>
<dbReference type="PANTHER" id="PTHR11994">
    <property type="entry name" value="60S RIBOSOMAL PROTEIN L11-RELATED"/>
    <property type="match status" value="1"/>
</dbReference>
<dbReference type="Pfam" id="PF00281">
    <property type="entry name" value="Ribosomal_L5"/>
    <property type="match status" value="1"/>
</dbReference>
<dbReference type="Pfam" id="PF00673">
    <property type="entry name" value="Ribosomal_L5_C"/>
    <property type="match status" value="1"/>
</dbReference>
<dbReference type="PIRSF" id="PIRSF002161">
    <property type="entry name" value="Ribosomal_L5"/>
    <property type="match status" value="1"/>
</dbReference>
<dbReference type="SUPFAM" id="SSF55282">
    <property type="entry name" value="RL5-like"/>
    <property type="match status" value="1"/>
</dbReference>
<dbReference type="PROSITE" id="PS00358">
    <property type="entry name" value="RIBOSOMAL_L5"/>
    <property type="match status" value="1"/>
</dbReference>
<feature type="chain" id="PRO_1000052832" description="Large ribosomal subunit protein uL5">
    <location>
        <begin position="1"/>
        <end position="185"/>
    </location>
</feature>
<protein>
    <recommendedName>
        <fullName evidence="1">Large ribosomal subunit protein uL5</fullName>
    </recommendedName>
    <alternativeName>
        <fullName evidence="2">50S ribosomal protein L5</fullName>
    </alternativeName>
</protein>
<proteinExistence type="inferred from homology"/>